<dbReference type="EC" id="6.3.4.5" evidence="1"/>
<dbReference type="EMBL" id="AE014299">
    <property type="protein sequence ID" value="AAN53363.1"/>
    <property type="molecule type" value="Genomic_DNA"/>
</dbReference>
<dbReference type="RefSeq" id="NP_715918.1">
    <property type="nucleotide sequence ID" value="NC_004347.2"/>
</dbReference>
<dbReference type="RefSeq" id="WP_011070650.1">
    <property type="nucleotide sequence ID" value="NC_004347.2"/>
</dbReference>
<dbReference type="SMR" id="Q8EK28"/>
<dbReference type="STRING" id="211586.SO_0278"/>
<dbReference type="PaxDb" id="211586-SO_0278"/>
<dbReference type="KEGG" id="son:SO_0278"/>
<dbReference type="PATRIC" id="fig|211586.12.peg.269"/>
<dbReference type="eggNOG" id="COG0137">
    <property type="taxonomic scope" value="Bacteria"/>
</dbReference>
<dbReference type="HOGENOM" id="CLU_032784_4_2_6"/>
<dbReference type="OrthoDB" id="9801641at2"/>
<dbReference type="PhylomeDB" id="Q8EK28"/>
<dbReference type="BioCyc" id="SONE211586:G1GMP-268-MONOMER"/>
<dbReference type="UniPathway" id="UPA00068">
    <property type="reaction ID" value="UER00113"/>
</dbReference>
<dbReference type="Proteomes" id="UP000008186">
    <property type="component" value="Chromosome"/>
</dbReference>
<dbReference type="GO" id="GO:0005737">
    <property type="term" value="C:cytoplasm"/>
    <property type="evidence" value="ECO:0000318"/>
    <property type="project" value="GO_Central"/>
</dbReference>
<dbReference type="GO" id="GO:0004055">
    <property type="term" value="F:argininosuccinate synthase activity"/>
    <property type="evidence" value="ECO:0000318"/>
    <property type="project" value="GO_Central"/>
</dbReference>
<dbReference type="GO" id="GO:0005524">
    <property type="term" value="F:ATP binding"/>
    <property type="evidence" value="ECO:0007669"/>
    <property type="project" value="UniProtKB-UniRule"/>
</dbReference>
<dbReference type="GO" id="GO:0000053">
    <property type="term" value="P:argininosuccinate metabolic process"/>
    <property type="evidence" value="ECO:0000318"/>
    <property type="project" value="GO_Central"/>
</dbReference>
<dbReference type="GO" id="GO:0006526">
    <property type="term" value="P:L-arginine biosynthetic process"/>
    <property type="evidence" value="ECO:0000318"/>
    <property type="project" value="GO_Central"/>
</dbReference>
<dbReference type="GO" id="GO:0000050">
    <property type="term" value="P:urea cycle"/>
    <property type="evidence" value="ECO:0000318"/>
    <property type="project" value="GO_Central"/>
</dbReference>
<dbReference type="CDD" id="cd01999">
    <property type="entry name" value="ASS"/>
    <property type="match status" value="1"/>
</dbReference>
<dbReference type="FunFam" id="1.20.5.470:FF:000005">
    <property type="entry name" value="Argininosuccinate synthase"/>
    <property type="match status" value="1"/>
</dbReference>
<dbReference type="FunFam" id="3.40.50.620:FF:000019">
    <property type="entry name" value="Argininosuccinate synthase"/>
    <property type="match status" value="1"/>
</dbReference>
<dbReference type="FunFam" id="3.90.1260.10:FF:000007">
    <property type="entry name" value="Argininosuccinate synthase"/>
    <property type="match status" value="1"/>
</dbReference>
<dbReference type="Gene3D" id="3.90.1260.10">
    <property type="entry name" value="Argininosuccinate synthetase, chain A, domain 2"/>
    <property type="match status" value="1"/>
</dbReference>
<dbReference type="Gene3D" id="3.40.50.620">
    <property type="entry name" value="HUPs"/>
    <property type="match status" value="1"/>
</dbReference>
<dbReference type="Gene3D" id="1.20.5.470">
    <property type="entry name" value="Single helix bin"/>
    <property type="match status" value="1"/>
</dbReference>
<dbReference type="HAMAP" id="MF_00005">
    <property type="entry name" value="Arg_succ_synth_type1"/>
    <property type="match status" value="1"/>
</dbReference>
<dbReference type="InterPro" id="IPR048268">
    <property type="entry name" value="Arginosuc_syn_C"/>
</dbReference>
<dbReference type="InterPro" id="IPR048267">
    <property type="entry name" value="Arginosuc_syn_N"/>
</dbReference>
<dbReference type="InterPro" id="IPR001518">
    <property type="entry name" value="Arginosuc_synth"/>
</dbReference>
<dbReference type="InterPro" id="IPR018223">
    <property type="entry name" value="Arginosuc_synth_CS"/>
</dbReference>
<dbReference type="InterPro" id="IPR023434">
    <property type="entry name" value="Arginosuc_synth_type_1_subfam"/>
</dbReference>
<dbReference type="InterPro" id="IPR024074">
    <property type="entry name" value="AS_cat/multimer_dom_body"/>
</dbReference>
<dbReference type="InterPro" id="IPR014729">
    <property type="entry name" value="Rossmann-like_a/b/a_fold"/>
</dbReference>
<dbReference type="NCBIfam" id="TIGR00032">
    <property type="entry name" value="argG"/>
    <property type="match status" value="1"/>
</dbReference>
<dbReference type="NCBIfam" id="NF001770">
    <property type="entry name" value="PRK00509.1"/>
    <property type="match status" value="1"/>
</dbReference>
<dbReference type="PANTHER" id="PTHR11587">
    <property type="entry name" value="ARGININOSUCCINATE SYNTHASE"/>
    <property type="match status" value="1"/>
</dbReference>
<dbReference type="PANTHER" id="PTHR11587:SF2">
    <property type="entry name" value="ARGININOSUCCINATE SYNTHASE"/>
    <property type="match status" value="1"/>
</dbReference>
<dbReference type="Pfam" id="PF20979">
    <property type="entry name" value="Arginosuc_syn_C"/>
    <property type="match status" value="1"/>
</dbReference>
<dbReference type="Pfam" id="PF00764">
    <property type="entry name" value="Arginosuc_synth"/>
    <property type="match status" value="1"/>
</dbReference>
<dbReference type="SUPFAM" id="SSF52402">
    <property type="entry name" value="Adenine nucleotide alpha hydrolases-like"/>
    <property type="match status" value="1"/>
</dbReference>
<dbReference type="SUPFAM" id="SSF69864">
    <property type="entry name" value="Argininosuccinate synthetase, C-terminal domain"/>
    <property type="match status" value="1"/>
</dbReference>
<dbReference type="PROSITE" id="PS00564">
    <property type="entry name" value="ARGININOSUCCIN_SYN_1"/>
    <property type="match status" value="1"/>
</dbReference>
<dbReference type="PROSITE" id="PS00565">
    <property type="entry name" value="ARGININOSUCCIN_SYN_2"/>
    <property type="match status" value="1"/>
</dbReference>
<evidence type="ECO:0000255" key="1">
    <source>
        <dbReference type="HAMAP-Rule" id="MF_00005"/>
    </source>
</evidence>
<proteinExistence type="inferred from homology"/>
<reference key="1">
    <citation type="journal article" date="2002" name="Nat. Biotechnol.">
        <title>Genome sequence of the dissimilatory metal ion-reducing bacterium Shewanella oneidensis.</title>
        <authorList>
            <person name="Heidelberg J.F."/>
            <person name="Paulsen I.T."/>
            <person name="Nelson K.E."/>
            <person name="Gaidos E.J."/>
            <person name="Nelson W.C."/>
            <person name="Read T.D."/>
            <person name="Eisen J.A."/>
            <person name="Seshadri R."/>
            <person name="Ward N.L."/>
            <person name="Methe B.A."/>
            <person name="Clayton R.A."/>
            <person name="Meyer T."/>
            <person name="Tsapin A."/>
            <person name="Scott J."/>
            <person name="Beanan M.J."/>
            <person name="Brinkac L.M."/>
            <person name="Daugherty S.C."/>
            <person name="DeBoy R.T."/>
            <person name="Dodson R.J."/>
            <person name="Durkin A.S."/>
            <person name="Haft D.H."/>
            <person name="Kolonay J.F."/>
            <person name="Madupu R."/>
            <person name="Peterson J.D."/>
            <person name="Umayam L.A."/>
            <person name="White O."/>
            <person name="Wolf A.M."/>
            <person name="Vamathevan J.J."/>
            <person name="Weidman J.F."/>
            <person name="Impraim M."/>
            <person name="Lee K."/>
            <person name="Berry K.J."/>
            <person name="Lee C."/>
            <person name="Mueller J."/>
            <person name="Khouri H.M."/>
            <person name="Gill J."/>
            <person name="Utterback T.R."/>
            <person name="McDonald L.A."/>
            <person name="Feldblyum T.V."/>
            <person name="Smith H.O."/>
            <person name="Venter J.C."/>
            <person name="Nealson K.H."/>
            <person name="Fraser C.M."/>
        </authorList>
    </citation>
    <scope>NUCLEOTIDE SEQUENCE [LARGE SCALE GENOMIC DNA]</scope>
    <source>
        <strain>ATCC 700550 / JCM 31522 / CIP 106686 / LMG 19005 / NCIMB 14063 / MR-1</strain>
    </source>
</reference>
<comment type="catalytic activity">
    <reaction evidence="1">
        <text>L-citrulline + L-aspartate + ATP = 2-(N(omega)-L-arginino)succinate + AMP + diphosphate + H(+)</text>
        <dbReference type="Rhea" id="RHEA:10932"/>
        <dbReference type="ChEBI" id="CHEBI:15378"/>
        <dbReference type="ChEBI" id="CHEBI:29991"/>
        <dbReference type="ChEBI" id="CHEBI:30616"/>
        <dbReference type="ChEBI" id="CHEBI:33019"/>
        <dbReference type="ChEBI" id="CHEBI:57472"/>
        <dbReference type="ChEBI" id="CHEBI:57743"/>
        <dbReference type="ChEBI" id="CHEBI:456215"/>
        <dbReference type="EC" id="6.3.4.5"/>
    </reaction>
</comment>
<comment type="pathway">
    <text evidence="1">Amino-acid biosynthesis; L-arginine biosynthesis; L-arginine from L-ornithine and carbamoyl phosphate: step 2/3.</text>
</comment>
<comment type="subunit">
    <text evidence="1">Homotetramer.</text>
</comment>
<comment type="subcellular location">
    <subcellularLocation>
        <location evidence="1">Cytoplasm</location>
    </subcellularLocation>
</comment>
<comment type="similarity">
    <text evidence="1">Belongs to the argininosuccinate synthase family. Type 1 subfamily.</text>
</comment>
<protein>
    <recommendedName>
        <fullName evidence="1">Argininosuccinate synthase</fullName>
        <ecNumber evidence="1">6.3.4.5</ecNumber>
    </recommendedName>
    <alternativeName>
        <fullName evidence="1">Citrulline--aspartate ligase</fullName>
    </alternativeName>
</protein>
<feature type="chain" id="PRO_0000148633" description="Argininosuccinate synthase">
    <location>
        <begin position="1"/>
        <end position="407"/>
    </location>
</feature>
<feature type="binding site" evidence="1">
    <location>
        <begin position="16"/>
        <end position="24"/>
    </location>
    <ligand>
        <name>ATP</name>
        <dbReference type="ChEBI" id="CHEBI:30616"/>
    </ligand>
</feature>
<feature type="binding site" evidence="1">
    <location>
        <position position="44"/>
    </location>
    <ligand>
        <name>ATP</name>
        <dbReference type="ChEBI" id="CHEBI:30616"/>
    </ligand>
</feature>
<feature type="binding site" evidence="1">
    <location>
        <position position="96"/>
    </location>
    <ligand>
        <name>L-citrulline</name>
        <dbReference type="ChEBI" id="CHEBI:57743"/>
    </ligand>
</feature>
<feature type="binding site" evidence="1">
    <location>
        <position position="101"/>
    </location>
    <ligand>
        <name>L-citrulline</name>
        <dbReference type="ChEBI" id="CHEBI:57743"/>
    </ligand>
</feature>
<feature type="binding site" evidence="1">
    <location>
        <position position="126"/>
    </location>
    <ligand>
        <name>ATP</name>
        <dbReference type="ChEBI" id="CHEBI:30616"/>
    </ligand>
</feature>
<feature type="binding site" evidence="1">
    <location>
        <position position="128"/>
    </location>
    <ligand>
        <name>L-aspartate</name>
        <dbReference type="ChEBI" id="CHEBI:29991"/>
    </ligand>
</feature>
<feature type="binding site" evidence="1">
    <location>
        <position position="132"/>
    </location>
    <ligand>
        <name>L-aspartate</name>
        <dbReference type="ChEBI" id="CHEBI:29991"/>
    </ligand>
</feature>
<feature type="binding site" evidence="1">
    <location>
        <position position="132"/>
    </location>
    <ligand>
        <name>L-citrulline</name>
        <dbReference type="ChEBI" id="CHEBI:57743"/>
    </ligand>
</feature>
<feature type="binding site" evidence="1">
    <location>
        <position position="133"/>
    </location>
    <ligand>
        <name>L-aspartate</name>
        <dbReference type="ChEBI" id="CHEBI:29991"/>
    </ligand>
</feature>
<feature type="binding site" evidence="1">
    <location>
        <position position="136"/>
    </location>
    <ligand>
        <name>L-citrulline</name>
        <dbReference type="ChEBI" id="CHEBI:57743"/>
    </ligand>
</feature>
<feature type="binding site" evidence="1">
    <location>
        <position position="185"/>
    </location>
    <ligand>
        <name>L-citrulline</name>
        <dbReference type="ChEBI" id="CHEBI:57743"/>
    </ligand>
</feature>
<feature type="binding site" evidence="1">
    <location>
        <position position="194"/>
    </location>
    <ligand>
        <name>L-citrulline</name>
        <dbReference type="ChEBI" id="CHEBI:57743"/>
    </ligand>
</feature>
<feature type="binding site" evidence="1">
    <location>
        <position position="270"/>
    </location>
    <ligand>
        <name>L-citrulline</name>
        <dbReference type="ChEBI" id="CHEBI:57743"/>
    </ligand>
</feature>
<feature type="binding site" evidence="1">
    <location>
        <position position="282"/>
    </location>
    <ligand>
        <name>L-citrulline</name>
        <dbReference type="ChEBI" id="CHEBI:57743"/>
    </ligand>
</feature>
<organism>
    <name type="scientific">Shewanella oneidensis (strain ATCC 700550 / JCM 31522 / CIP 106686 / LMG 19005 / NCIMB 14063 / MR-1)</name>
    <dbReference type="NCBI Taxonomy" id="211586"/>
    <lineage>
        <taxon>Bacteria</taxon>
        <taxon>Pseudomonadati</taxon>
        <taxon>Pseudomonadota</taxon>
        <taxon>Gammaproteobacteria</taxon>
        <taxon>Alteromonadales</taxon>
        <taxon>Shewanellaceae</taxon>
        <taxon>Shewanella</taxon>
    </lineage>
</organism>
<keyword id="KW-0028">Amino-acid biosynthesis</keyword>
<keyword id="KW-0055">Arginine biosynthesis</keyword>
<keyword id="KW-0067">ATP-binding</keyword>
<keyword id="KW-0963">Cytoplasm</keyword>
<keyword id="KW-0436">Ligase</keyword>
<keyword id="KW-0547">Nucleotide-binding</keyword>
<keyword id="KW-1185">Reference proteome</keyword>
<gene>
    <name evidence="1" type="primary">argG</name>
    <name type="ordered locus">SO_0278</name>
</gene>
<sequence>MSIENKNTGVKKVVLAYSGGLDTSAIIPWLKENYDNCEIIAFCADVGQGEEELIGLTEKALASGASECHIVDLKEEFVKDYIYPTMATGAIYEGTYLLGTSMARPIIAKAQVEVARKVGADALCHGCTGKGNDQVRFEGCFAALAPDLKVIAPWREWTMQSREDLLAYLAERNIKTSASATKIYSRDANAFHISHEGGELEDPWNEPSKGVWTLTADPEDAPNQAEYVSLEVENGRVTKVNGEALTPYAALMKLNAIAAPHGVGRIDITENRLVGMKSRGCYETPGGTVMFAALRAIEELVLDKTSRNWREQVGAQMAHLVYDGRWFTPLCKSLLAASESLAESVNGEVVVKLYKGHAIAVKKRSPNSLYSEAFATFGEDQVYDQKHAEGFIRLYSLASRIRALNAK</sequence>
<accession>Q8EK28</accession>
<name>ASSY_SHEON</name>